<gene>
    <name evidence="1" type="primary">rpiA</name>
    <name type="ordered locus">LHK_00884</name>
</gene>
<reference key="1">
    <citation type="journal article" date="2009" name="PLoS Genet.">
        <title>The complete genome and proteome of Laribacter hongkongensis reveal potential mechanisms for adaptations to different temperatures and habitats.</title>
        <authorList>
            <person name="Woo P.C.Y."/>
            <person name="Lau S.K.P."/>
            <person name="Tse H."/>
            <person name="Teng J.L.L."/>
            <person name="Curreem S.O."/>
            <person name="Tsang A.K.L."/>
            <person name="Fan R.Y.Y."/>
            <person name="Wong G.K.M."/>
            <person name="Huang Y."/>
            <person name="Loman N.J."/>
            <person name="Snyder L.A.S."/>
            <person name="Cai J.J."/>
            <person name="Huang J.-D."/>
            <person name="Mak W."/>
            <person name="Pallen M.J."/>
            <person name="Lok S."/>
            <person name="Yuen K.-Y."/>
        </authorList>
    </citation>
    <scope>NUCLEOTIDE SEQUENCE [LARGE SCALE GENOMIC DNA]</scope>
    <source>
        <strain>HLHK9</strain>
    </source>
</reference>
<comment type="function">
    <text evidence="1">Catalyzes the reversible conversion of ribose-5-phosphate to ribulose 5-phosphate.</text>
</comment>
<comment type="catalytic activity">
    <reaction evidence="1">
        <text>aldehydo-D-ribose 5-phosphate = D-ribulose 5-phosphate</text>
        <dbReference type="Rhea" id="RHEA:14657"/>
        <dbReference type="ChEBI" id="CHEBI:58121"/>
        <dbReference type="ChEBI" id="CHEBI:58273"/>
        <dbReference type="EC" id="5.3.1.6"/>
    </reaction>
</comment>
<comment type="pathway">
    <text evidence="1">Carbohydrate degradation; pentose phosphate pathway; D-ribose 5-phosphate from D-ribulose 5-phosphate (non-oxidative stage): step 1/1.</text>
</comment>
<comment type="subunit">
    <text evidence="1">Homodimer.</text>
</comment>
<comment type="similarity">
    <text evidence="1">Belongs to the ribose 5-phosphate isomerase family.</text>
</comment>
<organism>
    <name type="scientific">Laribacter hongkongensis (strain HLHK9)</name>
    <dbReference type="NCBI Taxonomy" id="557598"/>
    <lineage>
        <taxon>Bacteria</taxon>
        <taxon>Pseudomonadati</taxon>
        <taxon>Pseudomonadota</taxon>
        <taxon>Betaproteobacteria</taxon>
        <taxon>Neisseriales</taxon>
        <taxon>Aquaspirillaceae</taxon>
        <taxon>Laribacter</taxon>
    </lineage>
</organism>
<evidence type="ECO:0000255" key="1">
    <source>
        <dbReference type="HAMAP-Rule" id="MF_00170"/>
    </source>
</evidence>
<keyword id="KW-0413">Isomerase</keyword>
<keyword id="KW-1185">Reference proteome</keyword>
<accession>C1D560</accession>
<name>RPIA_LARHH</name>
<feature type="chain" id="PRO_1000194712" description="Ribose-5-phosphate isomerase A">
    <location>
        <begin position="1"/>
        <end position="220"/>
    </location>
</feature>
<feature type="active site" description="Proton acceptor" evidence="1">
    <location>
        <position position="104"/>
    </location>
</feature>
<feature type="binding site" evidence="1">
    <location>
        <begin position="29"/>
        <end position="32"/>
    </location>
    <ligand>
        <name>substrate</name>
    </ligand>
</feature>
<feature type="binding site" evidence="1">
    <location>
        <begin position="82"/>
        <end position="85"/>
    </location>
    <ligand>
        <name>substrate</name>
    </ligand>
</feature>
<feature type="binding site" evidence="1">
    <location>
        <begin position="95"/>
        <end position="98"/>
    </location>
    <ligand>
        <name>substrate</name>
    </ligand>
</feature>
<feature type="binding site" evidence="1">
    <location>
        <position position="122"/>
    </location>
    <ligand>
        <name>substrate</name>
    </ligand>
</feature>
<sequence>MNEQDKMKAAAARKAIDYVPEGAIIGVGTGSTANFFIDELARIKDRIEGAVASSQATADRLKAIGIQVFDLNGVGELPVYVDGCDEINHYLHMIKGGGGALTREKIVATSSRQFICIADESKLVKRLGAFPLPVEVIPMARSLVARKLVKLGGHPEWRENFVTDNGNLILDVHDLAIDQPLEMEETINRMAGVVTCGLFARRRADVLLLGRSDGTVQTIE</sequence>
<proteinExistence type="inferred from homology"/>
<protein>
    <recommendedName>
        <fullName evidence="1">Ribose-5-phosphate isomerase A</fullName>
        <ecNumber evidence="1">5.3.1.6</ecNumber>
    </recommendedName>
    <alternativeName>
        <fullName evidence="1">Phosphoriboisomerase A</fullName>
        <shortName evidence="1">PRI</shortName>
    </alternativeName>
</protein>
<dbReference type="EC" id="5.3.1.6" evidence="1"/>
<dbReference type="EMBL" id="CP001154">
    <property type="protein sequence ID" value="ACO73877.1"/>
    <property type="molecule type" value="Genomic_DNA"/>
</dbReference>
<dbReference type="RefSeq" id="WP_012696369.1">
    <property type="nucleotide sequence ID" value="NC_012559.1"/>
</dbReference>
<dbReference type="SMR" id="C1D560"/>
<dbReference type="STRING" id="557598.LHK_00884"/>
<dbReference type="GeneID" id="75110205"/>
<dbReference type="KEGG" id="lhk:LHK_00884"/>
<dbReference type="eggNOG" id="COG0120">
    <property type="taxonomic scope" value="Bacteria"/>
</dbReference>
<dbReference type="HOGENOM" id="CLU_056590_1_1_4"/>
<dbReference type="UniPathway" id="UPA00115">
    <property type="reaction ID" value="UER00412"/>
</dbReference>
<dbReference type="Proteomes" id="UP000002010">
    <property type="component" value="Chromosome"/>
</dbReference>
<dbReference type="GO" id="GO:0005829">
    <property type="term" value="C:cytosol"/>
    <property type="evidence" value="ECO:0007669"/>
    <property type="project" value="TreeGrafter"/>
</dbReference>
<dbReference type="GO" id="GO:0004751">
    <property type="term" value="F:ribose-5-phosphate isomerase activity"/>
    <property type="evidence" value="ECO:0007669"/>
    <property type="project" value="UniProtKB-UniRule"/>
</dbReference>
<dbReference type="GO" id="GO:0006014">
    <property type="term" value="P:D-ribose metabolic process"/>
    <property type="evidence" value="ECO:0007669"/>
    <property type="project" value="TreeGrafter"/>
</dbReference>
<dbReference type="GO" id="GO:0009052">
    <property type="term" value="P:pentose-phosphate shunt, non-oxidative branch"/>
    <property type="evidence" value="ECO:0007669"/>
    <property type="project" value="UniProtKB-UniRule"/>
</dbReference>
<dbReference type="CDD" id="cd01398">
    <property type="entry name" value="RPI_A"/>
    <property type="match status" value="1"/>
</dbReference>
<dbReference type="FunFam" id="3.30.70.260:FF:000004">
    <property type="entry name" value="Ribose-5-phosphate isomerase A"/>
    <property type="match status" value="1"/>
</dbReference>
<dbReference type="FunFam" id="3.40.50.1360:FF:000001">
    <property type="entry name" value="Ribose-5-phosphate isomerase A"/>
    <property type="match status" value="1"/>
</dbReference>
<dbReference type="Gene3D" id="3.30.70.260">
    <property type="match status" value="1"/>
</dbReference>
<dbReference type="Gene3D" id="3.40.50.1360">
    <property type="match status" value="1"/>
</dbReference>
<dbReference type="HAMAP" id="MF_00170">
    <property type="entry name" value="Rib_5P_isom_A"/>
    <property type="match status" value="1"/>
</dbReference>
<dbReference type="InterPro" id="IPR037171">
    <property type="entry name" value="NagB/RpiA_transferase-like"/>
</dbReference>
<dbReference type="InterPro" id="IPR020672">
    <property type="entry name" value="Ribose5P_isomerase_typA_subgr"/>
</dbReference>
<dbReference type="InterPro" id="IPR004788">
    <property type="entry name" value="Ribose5P_isomerase_type_A"/>
</dbReference>
<dbReference type="NCBIfam" id="NF001924">
    <property type="entry name" value="PRK00702.1"/>
    <property type="match status" value="1"/>
</dbReference>
<dbReference type="NCBIfam" id="TIGR00021">
    <property type="entry name" value="rpiA"/>
    <property type="match status" value="1"/>
</dbReference>
<dbReference type="PANTHER" id="PTHR11934">
    <property type="entry name" value="RIBOSE-5-PHOSPHATE ISOMERASE"/>
    <property type="match status" value="1"/>
</dbReference>
<dbReference type="PANTHER" id="PTHR11934:SF0">
    <property type="entry name" value="RIBOSE-5-PHOSPHATE ISOMERASE"/>
    <property type="match status" value="1"/>
</dbReference>
<dbReference type="Pfam" id="PF06026">
    <property type="entry name" value="Rib_5-P_isom_A"/>
    <property type="match status" value="1"/>
</dbReference>
<dbReference type="SUPFAM" id="SSF75445">
    <property type="entry name" value="D-ribose-5-phosphate isomerase (RpiA), lid domain"/>
    <property type="match status" value="1"/>
</dbReference>
<dbReference type="SUPFAM" id="SSF100950">
    <property type="entry name" value="NagB/RpiA/CoA transferase-like"/>
    <property type="match status" value="1"/>
</dbReference>